<dbReference type="EMBL" id="AAFI02000011">
    <property type="protein sequence ID" value="EAL70626.1"/>
    <property type="molecule type" value="Genomic_DNA"/>
</dbReference>
<dbReference type="EMBL" id="AAFI02000009">
    <property type="protein sequence ID" value="EAL70806.1"/>
    <property type="molecule type" value="Genomic_DNA"/>
</dbReference>
<dbReference type="RefSeq" id="XP_644552.1">
    <property type="nucleotide sequence ID" value="XM_639460.1"/>
</dbReference>
<dbReference type="RefSeq" id="XP_644699.1">
    <property type="nucleotide sequence ID" value="XM_639607.1"/>
</dbReference>
<dbReference type="SMR" id="Q556R9"/>
<dbReference type="PaxDb" id="44689-DDB0168040"/>
<dbReference type="EnsemblProtists" id="EAL70626">
    <property type="protein sequence ID" value="EAL70626"/>
    <property type="gene ID" value="DDB_G0273871"/>
</dbReference>
<dbReference type="EnsemblProtists" id="EAL70806">
    <property type="protein sequence ID" value="EAL70806"/>
    <property type="gene ID" value="DDB_G0273177"/>
</dbReference>
<dbReference type="GeneID" id="8618798"/>
<dbReference type="GeneID" id="8619178"/>
<dbReference type="KEGG" id="ddi:DDB_G0273177"/>
<dbReference type="KEGG" id="ddi:DDB_G0273871"/>
<dbReference type="dictyBase" id="DDB_G0273177"/>
<dbReference type="dictyBase" id="DDB_G0273871"/>
<dbReference type="VEuPathDB" id="AmoebaDB:DDB_G0273871"/>
<dbReference type="eggNOG" id="ENOG502RIC6">
    <property type="taxonomic scope" value="Eukaryota"/>
</dbReference>
<dbReference type="HOGENOM" id="CLU_100689_4_0_1"/>
<dbReference type="InParanoid" id="Q556R9"/>
<dbReference type="OMA" id="LMWKYQQ"/>
<dbReference type="PhylomeDB" id="Q556R9"/>
<dbReference type="PRO" id="PR:Q556R9"/>
<dbReference type="Proteomes" id="UP000002195">
    <property type="component" value="Chromosome 2"/>
</dbReference>
<dbReference type="GO" id="GO:0016857">
    <property type="term" value="F:racemase and epimerase activity, acting on carbohydrates and derivatives"/>
    <property type="evidence" value="ECO:0007669"/>
    <property type="project" value="InterPro"/>
</dbReference>
<dbReference type="Gene3D" id="3.30.70.100">
    <property type="match status" value="1"/>
</dbReference>
<dbReference type="InterPro" id="IPR052996">
    <property type="entry name" value="Carb_Metab_Mutarotase"/>
</dbReference>
<dbReference type="InterPro" id="IPR011008">
    <property type="entry name" value="Dimeric_a/b-barrel"/>
</dbReference>
<dbReference type="InterPro" id="IPR008000">
    <property type="entry name" value="Rham/fucose_mutarotase"/>
</dbReference>
<dbReference type="PANTHER" id="PTHR43239">
    <property type="entry name" value="UPF0734 PROTEIN DDB_G0273871/DDB_G0273177"/>
    <property type="match status" value="1"/>
</dbReference>
<dbReference type="PANTHER" id="PTHR43239:SF1">
    <property type="entry name" value="UPF0734 PROTEIN DDB_G0273871_DDB_G0273177"/>
    <property type="match status" value="1"/>
</dbReference>
<dbReference type="Pfam" id="PF05336">
    <property type="entry name" value="rhaM"/>
    <property type="match status" value="1"/>
</dbReference>
<dbReference type="SUPFAM" id="SSF54909">
    <property type="entry name" value="Dimeric alpha+beta barrel"/>
    <property type="match status" value="1"/>
</dbReference>
<feature type="chain" id="PRO_0000365739" description="UPF0734 protein DDB_G0273871/DDB_G0273177">
    <location>
        <begin position="1"/>
        <end position="125"/>
    </location>
</feature>
<evidence type="ECO:0000305" key="1"/>
<protein>
    <recommendedName>
        <fullName>UPF0734 protein DDB_G0273871/DDB_G0273177</fullName>
    </recommendedName>
</protein>
<proteinExistence type="inferred from homology"/>
<sequence>MDSCDYKSYAQALDLVNDKELIEEYKKYHKNVWKEVNEALCSIGIKKMKIFLLGTHLFMYYEARADFDPKIDFQKYTELTPKANEWDNLMRKFQQKISDIPENQLGEWWSPMDLVYDLDWFKQQQ</sequence>
<keyword id="KW-1185">Reference proteome</keyword>
<gene>
    <name type="ORF">DDB_G0273871</name>
</gene>
<gene>
    <name type="ORF">DDB_G0273177</name>
</gene>
<name>Y3871_DICDI</name>
<accession>Q556R9</accession>
<accession>Q86JX4</accession>
<reference key="1">
    <citation type="journal article" date="2002" name="Nature">
        <title>Sequence and analysis of chromosome 2 of Dictyostelium discoideum.</title>
        <authorList>
            <person name="Gloeckner G."/>
            <person name="Eichinger L."/>
            <person name="Szafranski K."/>
            <person name="Pachebat J.A."/>
            <person name="Bankier A.T."/>
            <person name="Dear P.H."/>
            <person name="Lehmann R."/>
            <person name="Baumgart C."/>
            <person name="Parra G."/>
            <person name="Abril J.F."/>
            <person name="Guigo R."/>
            <person name="Kumpf K."/>
            <person name="Tunggal B."/>
            <person name="Cox E.C."/>
            <person name="Quail M.A."/>
            <person name="Platzer M."/>
            <person name="Rosenthal A."/>
            <person name="Noegel A.A."/>
        </authorList>
    </citation>
    <scope>NUCLEOTIDE SEQUENCE [LARGE SCALE GENOMIC DNA]</scope>
    <source>
        <strain>AX4</strain>
    </source>
</reference>
<reference key="2">
    <citation type="journal article" date="2005" name="Nature">
        <title>The genome of the social amoeba Dictyostelium discoideum.</title>
        <authorList>
            <person name="Eichinger L."/>
            <person name="Pachebat J.A."/>
            <person name="Gloeckner G."/>
            <person name="Rajandream M.A."/>
            <person name="Sucgang R."/>
            <person name="Berriman M."/>
            <person name="Song J."/>
            <person name="Olsen R."/>
            <person name="Szafranski K."/>
            <person name="Xu Q."/>
            <person name="Tunggal B."/>
            <person name="Kummerfeld S."/>
            <person name="Madera M."/>
            <person name="Konfortov B.A."/>
            <person name="Rivero F."/>
            <person name="Bankier A.T."/>
            <person name="Lehmann R."/>
            <person name="Hamlin N."/>
            <person name="Davies R."/>
            <person name="Gaudet P."/>
            <person name="Fey P."/>
            <person name="Pilcher K."/>
            <person name="Chen G."/>
            <person name="Saunders D."/>
            <person name="Sodergren E.J."/>
            <person name="Davis P."/>
            <person name="Kerhornou A."/>
            <person name="Nie X."/>
            <person name="Hall N."/>
            <person name="Anjard C."/>
            <person name="Hemphill L."/>
            <person name="Bason N."/>
            <person name="Farbrother P."/>
            <person name="Desany B."/>
            <person name="Just E."/>
            <person name="Morio T."/>
            <person name="Rost R."/>
            <person name="Churcher C.M."/>
            <person name="Cooper J."/>
            <person name="Haydock S."/>
            <person name="van Driessche N."/>
            <person name="Cronin A."/>
            <person name="Goodhead I."/>
            <person name="Muzny D.M."/>
            <person name="Mourier T."/>
            <person name="Pain A."/>
            <person name="Lu M."/>
            <person name="Harper D."/>
            <person name="Lindsay R."/>
            <person name="Hauser H."/>
            <person name="James K.D."/>
            <person name="Quiles M."/>
            <person name="Madan Babu M."/>
            <person name="Saito T."/>
            <person name="Buchrieser C."/>
            <person name="Wardroper A."/>
            <person name="Felder M."/>
            <person name="Thangavelu M."/>
            <person name="Johnson D."/>
            <person name="Knights A."/>
            <person name="Loulseged H."/>
            <person name="Mungall K.L."/>
            <person name="Oliver K."/>
            <person name="Price C."/>
            <person name="Quail M.A."/>
            <person name="Urushihara H."/>
            <person name="Hernandez J."/>
            <person name="Rabbinowitsch E."/>
            <person name="Steffen D."/>
            <person name="Sanders M."/>
            <person name="Ma J."/>
            <person name="Kohara Y."/>
            <person name="Sharp S."/>
            <person name="Simmonds M.N."/>
            <person name="Spiegler S."/>
            <person name="Tivey A."/>
            <person name="Sugano S."/>
            <person name="White B."/>
            <person name="Walker D."/>
            <person name="Woodward J.R."/>
            <person name="Winckler T."/>
            <person name="Tanaka Y."/>
            <person name="Shaulsky G."/>
            <person name="Schleicher M."/>
            <person name="Weinstock G.M."/>
            <person name="Rosenthal A."/>
            <person name="Cox E.C."/>
            <person name="Chisholm R.L."/>
            <person name="Gibbs R.A."/>
            <person name="Loomis W.F."/>
            <person name="Platzer M."/>
            <person name="Kay R.R."/>
            <person name="Williams J.G."/>
            <person name="Dear P.H."/>
            <person name="Noegel A.A."/>
            <person name="Barrell B.G."/>
            <person name="Kuspa A."/>
        </authorList>
    </citation>
    <scope>NUCLEOTIDE SEQUENCE [LARGE SCALE GENOMIC DNA]</scope>
    <source>
        <strain>AX4</strain>
    </source>
</reference>
<organism>
    <name type="scientific">Dictyostelium discoideum</name>
    <name type="common">Social amoeba</name>
    <dbReference type="NCBI Taxonomy" id="44689"/>
    <lineage>
        <taxon>Eukaryota</taxon>
        <taxon>Amoebozoa</taxon>
        <taxon>Evosea</taxon>
        <taxon>Eumycetozoa</taxon>
        <taxon>Dictyostelia</taxon>
        <taxon>Dictyosteliales</taxon>
        <taxon>Dictyosteliaceae</taxon>
        <taxon>Dictyostelium</taxon>
    </lineage>
</organism>
<comment type="similarity">
    <text evidence="1">Belongs to the UPF0734 family.</text>
</comment>
<comment type="caution">
    <text evidence="1">The gene for this protein is duplicated in strains AX3 and AX4. These strains contain a duplication of a segment of 750 kb of chromosome 2 compared to the corresponding sequence in strain AX2.</text>
</comment>